<feature type="signal peptide" evidence="2">
    <location>
        <begin position="1"/>
        <end position="19"/>
    </location>
</feature>
<feature type="chain" id="PRO_0000010997" description="Ciliary neurotrophic factor receptor subunit alpha">
    <location>
        <begin position="20"/>
        <end position="334"/>
    </location>
</feature>
<feature type="propeptide" id="PRO_0000010998" description="Removed in mature form" evidence="2">
    <location>
        <begin position="335"/>
        <end position="362"/>
    </location>
</feature>
<feature type="domain" description="Ig-like C2-type">
    <location>
        <begin position="23"/>
        <end position="103"/>
    </location>
</feature>
<feature type="domain" description="Fibronectin type-III 1" evidence="4">
    <location>
        <begin position="106"/>
        <end position="203"/>
    </location>
</feature>
<feature type="domain" description="Fibronectin type-III 2" evidence="4">
    <location>
        <begin position="204"/>
        <end position="304"/>
    </location>
</feature>
<feature type="short sequence motif" description="WSXWS motif">
    <location>
        <begin position="288"/>
        <end position="292"/>
    </location>
</feature>
<feature type="lipid moiety-binding region" description="GPI-anchor amidated aspartate" evidence="2">
    <location>
        <position position="334"/>
    </location>
</feature>
<feature type="glycosylation site" description="N-linked (GlcNAc...) asparagine" evidence="2">
    <location>
        <position position="58"/>
    </location>
</feature>
<feature type="glycosylation site" description="N-linked (GlcNAc...) asparagine" evidence="2">
    <location>
        <position position="68"/>
    </location>
</feature>
<feature type="glycosylation site" description="N-linked (GlcNAc...) asparagine" evidence="2">
    <location>
        <position position="140"/>
    </location>
</feature>
<feature type="glycosylation site" description="N-linked (GlcNAc...) asparagine" evidence="2">
    <location>
        <position position="188"/>
    </location>
</feature>
<feature type="disulfide bond" evidence="3">
    <location>
        <begin position="44"/>
        <end position="87"/>
    </location>
</feature>
<feature type="sequence conflict" description="In Ref. 2; CAA88184." evidence="5" ref="2">
    <original>A</original>
    <variation>V</variation>
    <location>
        <position position="337"/>
    </location>
</feature>
<evidence type="ECO:0000250" key="1"/>
<evidence type="ECO:0000255" key="2"/>
<evidence type="ECO:0000255" key="3">
    <source>
        <dbReference type="PROSITE-ProRule" id="PRU00114"/>
    </source>
</evidence>
<evidence type="ECO:0000255" key="4">
    <source>
        <dbReference type="PROSITE-ProRule" id="PRU00316"/>
    </source>
</evidence>
<evidence type="ECO:0000305" key="5"/>
<reference key="1">
    <citation type="journal article" date="1995" name="J. Neurochem.">
        <title>Cloning of the alpha component of the chick ciliary neurotrophic factor receptor: developmental expression and down-regulation in denervated skeletal muscle.</title>
        <authorList>
            <person name="Ip F.C.F."/>
            <person name="Fu A.K.Y."/>
            <person name="Tsim K.W.K."/>
            <person name="Ip N.Y."/>
        </authorList>
    </citation>
    <scope>NUCLEOTIDE SEQUENCE [MRNA]</scope>
    <source>
        <tissue>Brain</tissue>
    </source>
</reference>
<reference key="2">
    <citation type="journal article" date="1995" name="Development">
        <title>Analysis of function and expression of the chick GPA receptor (GPAR alpha) suggests multiple roles in neuronal development.</title>
        <authorList>
            <person name="Heller S."/>
            <person name="Finn T.P."/>
            <person name="Huber J."/>
            <person name="Nishi R."/>
            <person name="Geissen M."/>
            <person name="Pueschel A.W."/>
            <person name="Rohrer H."/>
        </authorList>
    </citation>
    <scope>NUCLEOTIDE SEQUENCE [MRNA]</scope>
</reference>
<comment type="function">
    <text>Binds to CNTF (GPA). The alpha subunit provides the receptor specificity.</text>
</comment>
<comment type="subunit">
    <text>Heterotrimer of the alpha subunit, LIFR and IL6ST.</text>
</comment>
<comment type="subcellular location">
    <subcellularLocation>
        <location evidence="1">Cell membrane</location>
        <topology evidence="1">Lipid-anchor</topology>
        <topology evidence="1">GPI-anchor</topology>
    </subcellularLocation>
</comment>
<comment type="tissue specificity">
    <text>Highly expressed in nervous system. Also found in skeletal muscle.</text>
</comment>
<comment type="domain">
    <text>The WSXWS motif appears to be necessary for proper protein folding and thereby efficient intracellular transport and cell-surface receptor binding.</text>
</comment>
<comment type="similarity">
    <text evidence="5">Belongs to the type I cytokine receptor family. Type 3 subfamily.</text>
</comment>
<name>CNTFR_CHICK</name>
<protein>
    <recommendedName>
        <fullName>Ciliary neurotrophic factor receptor subunit alpha</fullName>
        <shortName>CNTF receptor subunit alpha</shortName>
        <shortName>CNTFR-alpha</shortName>
    </recommendedName>
    <alternativeName>
        <fullName>Growth-promoting activity receptor subunit alpha</fullName>
        <shortName>GPA receptor subunit alpha</shortName>
        <shortName>GPAR-alpha</shortName>
    </alternativeName>
</protein>
<organism>
    <name type="scientific">Gallus gallus</name>
    <name type="common">Chicken</name>
    <dbReference type="NCBI Taxonomy" id="9031"/>
    <lineage>
        <taxon>Eukaryota</taxon>
        <taxon>Metazoa</taxon>
        <taxon>Chordata</taxon>
        <taxon>Craniata</taxon>
        <taxon>Vertebrata</taxon>
        <taxon>Euteleostomi</taxon>
        <taxon>Archelosauria</taxon>
        <taxon>Archosauria</taxon>
        <taxon>Dinosauria</taxon>
        <taxon>Saurischia</taxon>
        <taxon>Theropoda</taxon>
        <taxon>Coelurosauria</taxon>
        <taxon>Aves</taxon>
        <taxon>Neognathae</taxon>
        <taxon>Galloanserae</taxon>
        <taxon>Galliformes</taxon>
        <taxon>Phasianidae</taxon>
        <taxon>Phasianinae</taxon>
        <taxon>Gallus</taxon>
    </lineage>
</organism>
<sequence length="362" mass="40308">MANPVPSACCVVLAAVVVVYAQRHSQQDSHIQYERVGADVTMKCGSMDWDAAVTWTANGTDIDDSHLNGSYLILKNVDLTQSGQYSCYEGSSWHLKYQTYLRVGVPPKEPVLMCRSNNYPKGFYCSWHLPSPTYIPNSFNISVIHGTREMVCEKDIFPKNRCHIRYLQLFSTVKYKVTLTVTNALGKNSTTLTFDEFAIVKPDPPESVVAKPVPNNPRRLEVSWQNPSSWPDPESFPLKFFLRYRPLILDQWQHVELSDGTSHTITDAYAGKEYIIQVAAKDNDIGTWSDWSVAVHATPWTEEPKHLTTEVQITETTSTSTSSFMPPPTTKICDKGAGVGSGAVAVCWTAGLVLAAYGVLFI</sequence>
<dbReference type="EMBL" id="U29245">
    <property type="protein sequence ID" value="AAA87838.1"/>
    <property type="molecule type" value="mRNA"/>
</dbReference>
<dbReference type="EMBL" id="Z48168">
    <property type="protein sequence ID" value="CAA88184.1"/>
    <property type="molecule type" value="mRNA"/>
</dbReference>
<dbReference type="PIR" id="S60614">
    <property type="entry name" value="S60614"/>
</dbReference>
<dbReference type="RefSeq" id="NP_990359.2">
    <property type="nucleotide sequence ID" value="NM_205028.2"/>
</dbReference>
<dbReference type="RefSeq" id="XP_040511360.2">
    <property type="nucleotide sequence ID" value="XM_040655426.2"/>
</dbReference>
<dbReference type="RefSeq" id="XP_040511363.1">
    <property type="nucleotide sequence ID" value="XM_040655429.2"/>
</dbReference>
<dbReference type="RefSeq" id="XP_040511364.1">
    <property type="nucleotide sequence ID" value="XM_040655430.1"/>
</dbReference>
<dbReference type="RefSeq" id="XP_040511365.1">
    <property type="nucleotide sequence ID" value="XM_040655431.1"/>
</dbReference>
<dbReference type="RefSeq" id="XP_040511366.1">
    <property type="nucleotide sequence ID" value="XM_040655432.1"/>
</dbReference>
<dbReference type="RefSeq" id="XP_046761205.1">
    <property type="nucleotide sequence ID" value="XM_046905249.1"/>
</dbReference>
<dbReference type="RefSeq" id="XP_046761206.1">
    <property type="nucleotide sequence ID" value="XM_046905250.1"/>
</dbReference>
<dbReference type="RefSeq" id="XP_046790767.1">
    <property type="nucleotide sequence ID" value="XM_046934811.1"/>
</dbReference>
<dbReference type="RefSeq" id="XP_046790773.1">
    <property type="nucleotide sequence ID" value="XM_046934817.1"/>
</dbReference>
<dbReference type="RefSeq" id="XP_046790774.1">
    <property type="nucleotide sequence ID" value="XM_046934818.1"/>
</dbReference>
<dbReference type="RefSeq" id="XP_046790775.1">
    <property type="nucleotide sequence ID" value="XM_046934819.1"/>
</dbReference>
<dbReference type="RefSeq" id="XP_046790776.1">
    <property type="nucleotide sequence ID" value="XM_046934820.1"/>
</dbReference>
<dbReference type="RefSeq" id="XP_046790777.1">
    <property type="nucleotide sequence ID" value="XM_046934821.1"/>
</dbReference>
<dbReference type="RefSeq" id="XP_046790778.1">
    <property type="nucleotide sequence ID" value="XM_046934822.1"/>
</dbReference>
<dbReference type="SMR" id="P51641"/>
<dbReference type="FunCoup" id="P51641">
    <property type="interactions" value="173"/>
</dbReference>
<dbReference type="STRING" id="9031.ENSGALP00000065868"/>
<dbReference type="GlyCosmos" id="P51641">
    <property type="glycosylation" value="4 sites, No reported glycans"/>
</dbReference>
<dbReference type="GlyGen" id="P51641">
    <property type="glycosylation" value="4 sites"/>
</dbReference>
<dbReference type="PaxDb" id="9031-ENSGALP00000040651"/>
<dbReference type="GeneID" id="395885"/>
<dbReference type="KEGG" id="gga:395885"/>
<dbReference type="CTD" id="1271"/>
<dbReference type="VEuPathDB" id="HostDB:geneid_395885"/>
<dbReference type="eggNOG" id="ENOG502QUDK">
    <property type="taxonomic scope" value="Eukaryota"/>
</dbReference>
<dbReference type="HOGENOM" id="CLU_047259_0_0_1"/>
<dbReference type="InParanoid" id="P51641"/>
<dbReference type="OrthoDB" id="9927622at2759"/>
<dbReference type="PhylomeDB" id="P51641"/>
<dbReference type="PRO" id="PR:P51641"/>
<dbReference type="Proteomes" id="UP000000539">
    <property type="component" value="Unassembled WGS sequence"/>
</dbReference>
<dbReference type="GO" id="GO:0070110">
    <property type="term" value="C:ciliary neurotrophic factor receptor complex"/>
    <property type="evidence" value="ECO:0000318"/>
    <property type="project" value="GO_Central"/>
</dbReference>
<dbReference type="GO" id="GO:0097059">
    <property type="term" value="C:CNTFR-CLCF1 complex"/>
    <property type="evidence" value="ECO:0000318"/>
    <property type="project" value="GO_Central"/>
</dbReference>
<dbReference type="GO" id="GO:0009897">
    <property type="term" value="C:external side of plasma membrane"/>
    <property type="evidence" value="ECO:0000318"/>
    <property type="project" value="GO_Central"/>
</dbReference>
<dbReference type="GO" id="GO:0019970">
    <property type="term" value="F:interleukin-11 binding"/>
    <property type="evidence" value="ECO:0000318"/>
    <property type="project" value="GO_Central"/>
</dbReference>
<dbReference type="GO" id="GO:0004921">
    <property type="term" value="F:interleukin-11 receptor activity"/>
    <property type="evidence" value="ECO:0000318"/>
    <property type="project" value="GO_Central"/>
</dbReference>
<dbReference type="GO" id="GO:0070120">
    <property type="term" value="P:ciliary neurotrophic factor-mediated signaling pathway"/>
    <property type="evidence" value="ECO:0000318"/>
    <property type="project" value="GO_Central"/>
</dbReference>
<dbReference type="GO" id="GO:0008284">
    <property type="term" value="P:positive regulation of cell population proliferation"/>
    <property type="evidence" value="ECO:0000318"/>
    <property type="project" value="GO_Central"/>
</dbReference>
<dbReference type="CDD" id="cd00063">
    <property type="entry name" value="FN3"/>
    <property type="match status" value="1"/>
</dbReference>
<dbReference type="FunFam" id="2.60.40.10:FF:000136">
    <property type="entry name" value="Ciliary neurotrophic factor receptor alpha"/>
    <property type="match status" value="1"/>
</dbReference>
<dbReference type="FunFam" id="2.60.40.10:FF:000564">
    <property type="entry name" value="Ciliary neurotrophic factor receptor subunit alpha"/>
    <property type="match status" value="1"/>
</dbReference>
<dbReference type="FunFam" id="2.60.40.10:FF:000944">
    <property type="entry name" value="Ciliary neurotrophic factor receptor subunit alpha"/>
    <property type="match status" value="1"/>
</dbReference>
<dbReference type="Gene3D" id="2.60.40.10">
    <property type="entry name" value="Immunoglobulins"/>
    <property type="match status" value="3"/>
</dbReference>
<dbReference type="InterPro" id="IPR003961">
    <property type="entry name" value="FN3_dom"/>
</dbReference>
<dbReference type="InterPro" id="IPR036116">
    <property type="entry name" value="FN3_sf"/>
</dbReference>
<dbReference type="InterPro" id="IPR003530">
    <property type="entry name" value="Hematopoietin_rcpt_L_F3_CS"/>
</dbReference>
<dbReference type="InterPro" id="IPR007110">
    <property type="entry name" value="Ig-like_dom"/>
</dbReference>
<dbReference type="InterPro" id="IPR036179">
    <property type="entry name" value="Ig-like_dom_sf"/>
</dbReference>
<dbReference type="InterPro" id="IPR013783">
    <property type="entry name" value="Ig-like_fold"/>
</dbReference>
<dbReference type="InterPro" id="IPR003598">
    <property type="entry name" value="Ig_sub2"/>
</dbReference>
<dbReference type="InterPro" id="IPR050379">
    <property type="entry name" value="Type-I_Cytokine_Rcpt"/>
</dbReference>
<dbReference type="PANTHER" id="PTHR23036:SF21">
    <property type="entry name" value="CILIARY NEUROTROPHIC FACTOR RECEPTOR SUBUNIT ALPHA"/>
    <property type="match status" value="1"/>
</dbReference>
<dbReference type="PANTHER" id="PTHR23036">
    <property type="entry name" value="CYTOKINE RECEPTOR"/>
    <property type="match status" value="1"/>
</dbReference>
<dbReference type="Pfam" id="PF00041">
    <property type="entry name" value="fn3"/>
    <property type="match status" value="1"/>
</dbReference>
<dbReference type="SMART" id="SM00060">
    <property type="entry name" value="FN3"/>
    <property type="match status" value="1"/>
</dbReference>
<dbReference type="SMART" id="SM00408">
    <property type="entry name" value="IGc2"/>
    <property type="match status" value="1"/>
</dbReference>
<dbReference type="SUPFAM" id="SSF49265">
    <property type="entry name" value="Fibronectin type III"/>
    <property type="match status" value="2"/>
</dbReference>
<dbReference type="SUPFAM" id="SSF48726">
    <property type="entry name" value="Immunoglobulin"/>
    <property type="match status" value="1"/>
</dbReference>
<dbReference type="PROSITE" id="PS50853">
    <property type="entry name" value="FN3"/>
    <property type="match status" value="2"/>
</dbReference>
<dbReference type="PROSITE" id="PS01354">
    <property type="entry name" value="HEMATOPO_REC_L_F3"/>
    <property type="match status" value="1"/>
</dbReference>
<dbReference type="PROSITE" id="PS50835">
    <property type="entry name" value="IG_LIKE"/>
    <property type="match status" value="1"/>
</dbReference>
<accession>P51641</accession>
<proteinExistence type="evidence at transcript level"/>
<gene>
    <name type="primary">CNTFR</name>
</gene>
<keyword id="KW-1003">Cell membrane</keyword>
<keyword id="KW-1015">Disulfide bond</keyword>
<keyword id="KW-0325">Glycoprotein</keyword>
<keyword id="KW-0336">GPI-anchor</keyword>
<keyword id="KW-0393">Immunoglobulin domain</keyword>
<keyword id="KW-0449">Lipoprotein</keyword>
<keyword id="KW-0472">Membrane</keyword>
<keyword id="KW-0675">Receptor</keyword>
<keyword id="KW-1185">Reference proteome</keyword>
<keyword id="KW-0677">Repeat</keyword>
<keyword id="KW-0732">Signal</keyword>